<organism>
    <name type="scientific">Saccharomyces cerevisiae (strain ATCC 204508 / S288c)</name>
    <name type="common">Baker's yeast</name>
    <dbReference type="NCBI Taxonomy" id="559292"/>
    <lineage>
        <taxon>Eukaryota</taxon>
        <taxon>Fungi</taxon>
        <taxon>Dikarya</taxon>
        <taxon>Ascomycota</taxon>
        <taxon>Saccharomycotina</taxon>
        <taxon>Saccharomycetes</taxon>
        <taxon>Saccharomycetales</taxon>
        <taxon>Saccharomycetaceae</taxon>
        <taxon>Saccharomyces</taxon>
    </lineage>
</organism>
<sequence>MGEEHKPLLDASGVDPREEDKTATAILRRKKKDNMLLVDDAINDDNSVIAINSNTMDKLELFRGDTVLVKGKKRKDTVLIVLIDDELEDGACRINRVVRNNLRIRLGDLVTIHPCPDIKYATRISVLPIADTIEGITGNLFDVFLKPYFVEAYRPVRKGDHFVVRGGMRQVEFKVVDVEPEEYAVVAQDTIIHWEGEPINREDEENNMNEVGYDDIGGCRKQMAQIREMVELPLRHPQLFKAIGIKPPRGVLMYGPPGTGKTLMARAVANETGAFFFLINGPEVMSKMAGESESNLRKAFEEAEKNAPAIIFIDEIDSIAPKRDKTNGEVERRVVSQLLTLMDGMKARSNVVVIAATNRPNSIDPALRRFGRFDREVDIGIPDATGRLEVLRIHTKNMKLADDVDLEALAAETHGYVGADIASLCSEAAMQQIREKMDLIDLDEDEIDAEVLDSLGVTMDNFRFALGNSNPSALRETVVESVNVTWDDVGGLDEIKEELKETVEYPVLHPDQYTKFGLSPSKGVLFYGPPGTGKTLLAKAVATEVSANFISVKGPELLSMWYGESESNIRDIFDKARAAAPTVVFLDELDSIAKARGGSLGDAGGASDRVVNQLLTEMDGMNAKKNVFVIGATNRPDQIDPAILRPGRLDQLIYVPLPDENARLSILNAQLRKTPLEPGLELTAIAKATQGFSGADLLYIVQRAAKYAIKDSIEAHRQHEAEKEVKVEGEDVEMTDEGAKAEQEPEVDPVPYITKEHFAEAMKTAKRSVSDAELRRYEAYSQQMKASRGQFSNFNFNDAPLGTTATDNANSNNSAPSGAGAAFGSNAEEDDDLYS</sequence>
<comment type="function">
    <text evidence="6 7 8 9 12 15 18 19 20 21 22 24 25 26 27 28 29">ATP-dependent chaperone which probably uses the energy provided by ATP hydrolysis to generate mechanical force to unfold substrate proteins, disassemble protein complexes, and disaggregate protein aggregates (PubMed:21454554, PubMed:31445887). By recruiting and promoting the degradation of ubiquitinated proteins, plays a role in the ubiquitin fusion degradation (UFD) pathway (PubMed:16428438). Has a role in the endoplasmic reticulum-associated degradation (ERAD) pathway which mediates the cytoplasmic elimination of misfolded proteins exported from the ER (PubMed:11740563, PubMed:11813000, PubMed:11847109, PubMed:21148305). Required for the proteasome-dependent processing/activation of MGA2 and SPT23 transcription factors leading to the subsequent expression of OLE1 (PubMed:11733065, PubMed:11847109). Has an additional role in the turnover of OLE1 where it targets ubiquitinated OLE1 and other proteins to the ERAD (PubMed:11847109). Regulates ubiquitin-mediated mitochondria protein degradation (PubMed:21070972, PubMed:27044889). Involved in spindle disassembly probably by promoting the degradation of spindle assembly factors ASE1 and CDC5 at the end of mitosis (PubMed:14636562). Component of the ribosome quality control complex (RQC), a ribosome-associated complex that mediates ubiquitination and extraction of incompletely synthesized nascent chains for proteasomal degradation (PubMed:23178123, PubMed:24261871). CDC48 may provide the mechanical force that dislodges the polyubiquitinated nascent peptides from the exit channel (PubMed:23178123, PubMed:24261871). Required for ribophagy, a process which relocalizes ribosomal particles into the vacuole for degradation in response to starvation (PubMed:20508643). Component of the DSC E3 ubiquitin ligase complexes that tag proteins present in Golgi, endosome and vacuole membranes and function in protein homeostasis under non-stress conditions and support a role in protein quality control (PubMed:29355480). Substrate initially binds through the attached polyubiquitin chain to UDF1/NPL4 and then moves through the pore of the ATPase rings and is thereby unfolded (PubMed:31249134, PubMed:31249135). Acts on a broad range of even well-folded proteins via ubiquitin-binding and unfolding to initiate substrate processing (PubMed:31249135). Involved in degradation of mislocalized tail-anchored transmembrane proteins extracted from the mitochondrion outer membrane by MSP1 and ubiquitinated by DOA10 (PubMed:31445887).</text>
</comment>
<comment type="catalytic activity">
    <reaction evidence="21">
        <text>ATP + H2O = ADP + phosphate + H(+)</text>
        <dbReference type="Rhea" id="RHEA:13065"/>
        <dbReference type="ChEBI" id="CHEBI:15377"/>
        <dbReference type="ChEBI" id="CHEBI:15378"/>
        <dbReference type="ChEBI" id="CHEBI:30616"/>
        <dbReference type="ChEBI" id="CHEBI:43474"/>
        <dbReference type="ChEBI" id="CHEBI:456216"/>
        <dbReference type="EC" id="3.6.4.6"/>
    </reaction>
</comment>
<comment type="activity regulation">
    <text evidence="1 21">The first ATP-binding region has low ATPase activity (By similarity). The second ATP-binding region is responsible for ATPase activity (By similarity). ATP binding to the first ATP-binding region induces intrinsic activity of the second ATP-binding region (PubMed:21454554). While ATP binding to the first ATP-binding region appears to prevent ATP hydrolysis by the second ATP-binding region, ADP-binding to first region promotes the coordinate and cooperative ATPase cycle of the second ATP-binding region (By similarity). ATP binding to the first ATP-binding region induces a conformational change, promoting the rotation of the first ATP-binding region relative to the second ATP-binding region in the hexamer (By similarity).</text>
</comment>
<comment type="subunit">
    <text evidence="5 6 12 13 14 15 16 17 18 19 20 22 23 25 26 27">Component of the heterotrimeric CDC48-NPL4-UFD1 ATPase complex (PubMed:16873066). The CDC48-NPL4-UFD1 ATPase complex interacts with the HRD1 ubiquitin ligase complex composed of the E3 ligase HRD1, its cofactors HRD3, USA1 and DER1, substrate recruiting factor YOS9 and CDC48-binding protein UBX2 (PubMed:16873066). Interaction between the complexes is mediated by interaction between CDC48-NPL4-UFD1 complex member CDC48 and HRD1 complex member UBX2 (PubMed:16873066). Forms a complex composed of CDC48, NPL4, UFD1, UFD2 and SHP1 (PubMed:16427015). Forms a complex composed of CDC48, NPL4, UFD1, DOA1, SHP1 and deubiquitinase OTU1; within the complex interacts with DOA1/UFD3 and OTU1 to prevent multiubiquitination of substrates (PubMed:16427015). Interacts with UFD2, to add further ubiquitin moieties; the interaction with UFD2 is prevented by DOA1/UFD3 (PubMed:16427015). Forms a complex composed of CDC48, DOA1, deubiquitinase UBP3 and probably BRE5; within the complex interacts with DOA1 and UBP3 (PubMed:20508643). Interacts (via C-terminus) with DOA1 (via PUL domain); the interaction is direct (PubMed:16428438, PubMed:19805280, PubMed:27044889). Interacts with NPL4 (PubMed:11598205, PubMed:11733065, PubMed:31249134). Interacts with SHP1/UBX1, UBX2, UBX3, UBX4, UBX5, UBX6 and UBX7 (PubMed:15258615, PubMed:31249134). Interacts with VMS1; the interaction recruits CDC48 to the mitochondria in response to mitochondrial stress (PubMed:21070972, PubMed:21148305). Component of the ribosome quality control complex (RQC), composed of the E3 ubiquitin ligase RKR1/LTN1, RQC1 and RQC2, as well as CDC48 and its ubiquitin-binding cofactors (PubMed:23178123, PubMed:23479637). RQC forms a stable complex with 60S ribosomal subunits (PubMed:23178123, PubMed:23479637). Interacts with ASE1 and CDC5; the interaction is likely to result in their degradation (PubMed:14636562). Component of the DSCc E3 ligase complexes composed of at least TUL1, DSC2, DSC3, UBX3, CDC48 as well as VLD1 for the vacuole-localized complex or GLD1 for the Golgi/endosome-localized complex (PubMed:29355480).</text>
</comment>
<comment type="interaction">
    <interactant intactId="EBI-4308">
        <id>P25694</id>
    </interactant>
    <interactant intactId="EBI-28528">
        <id>P53741</id>
        <label>BRE5</label>
    </interactant>
    <organismsDiffer>false</organismsDiffer>
    <experiments>4</experiments>
</comment>
<comment type="interaction">
    <interactant intactId="EBI-4308">
        <id>P25694</id>
    </interactant>
    <interactant intactId="EBI-4308">
        <id>P25694</id>
        <label>CDC48</label>
    </interactant>
    <organismsDiffer>false</organismsDiffer>
    <experiments>3</experiments>
</comment>
<comment type="interaction">
    <interactant intactId="EBI-4308">
        <id>P25694</id>
    </interactant>
    <interactant intactId="EBI-5761">
        <id>P38307</id>
        <label>DER1</label>
    </interactant>
    <organismsDiffer>false</organismsDiffer>
    <experiments>5</experiments>
</comment>
<comment type="interaction">
    <interactant intactId="EBI-4308">
        <id>P25694</id>
    </interactant>
    <interactant intactId="EBI-6017">
        <id>P36037</id>
        <label>DOA1</label>
    </interactant>
    <organismsDiffer>false</organismsDiffer>
    <experiments>6</experiments>
</comment>
<comment type="interaction">
    <interactant intactId="EBI-4308">
        <id>P25694</id>
    </interactant>
    <interactant intactId="EBI-37613">
        <id>Q08109</id>
        <label>HRD1</label>
    </interactant>
    <organismsDiffer>false</organismsDiffer>
    <experiments>9</experiments>
</comment>
<comment type="interaction">
    <interactant intactId="EBI-4308">
        <id>P25694</id>
    </interactant>
    <interactant intactId="EBI-31647">
        <id>Q05787</id>
        <label>HRD3</label>
    </interactant>
    <organismsDiffer>false</organismsDiffer>
    <experiments>7</experiments>
</comment>
<comment type="interaction">
    <interactant intactId="EBI-4308">
        <id>P25694</id>
    </interactant>
    <interactant intactId="EBI-12193">
        <id>P33755</id>
        <label>NPL4</label>
    </interactant>
    <organismsDiffer>false</organismsDiffer>
    <experiments>12</experiments>
</comment>
<comment type="interaction">
    <interactant intactId="EBI-4308">
        <id>P25694</id>
    </interactant>
    <interactant intactId="EBI-22837">
        <id>P43558</id>
        <label>OTU1</label>
    </interactant>
    <organismsDiffer>false</organismsDiffer>
    <experiments>3</experiments>
</comment>
<comment type="interaction">
    <interactant intactId="EBI-4308">
        <id>P25694</id>
    </interactant>
    <interactant intactId="EBI-14668">
        <id>P32628</id>
        <label>RAD23</label>
    </interactant>
    <organismsDiffer>false</organismsDiffer>
    <experiments>2</experiments>
</comment>
<comment type="interaction">
    <interactant intactId="EBI-4308">
        <id>P25694</id>
    </interactant>
    <interactant intactId="EBI-14719">
        <id>P06778</id>
        <label>RAD52</label>
    </interactant>
    <organismsDiffer>false</organismsDiffer>
    <experiments>4</experiments>
</comment>
<comment type="interaction">
    <interactant intactId="EBI-4308">
        <id>P25694</id>
    </interactant>
    <interactant intactId="EBI-17093">
        <id>P34223</id>
        <label>SHP1</label>
    </interactant>
    <organismsDiffer>false</organismsDiffer>
    <experiments>11</experiments>
</comment>
<comment type="interaction">
    <interactant intactId="EBI-4308">
        <id>P25694</id>
    </interactant>
    <interactant intactId="EBI-17490">
        <id>Q12306</id>
        <label>SMT3</label>
    </interactant>
    <organismsDiffer>false</organismsDiffer>
    <experiments>3</experiments>
</comment>
<comment type="interaction">
    <interactant intactId="EBI-4308">
        <id>P25694</id>
    </interactant>
    <interactant intactId="EBI-18208">
        <id>P40318</id>
        <label>SSM4</label>
    </interactant>
    <organismsDiffer>false</organismsDiffer>
    <experiments>5</experiments>
</comment>
<comment type="interaction">
    <interactant intactId="EBI-4308">
        <id>P25694</id>
    </interactant>
    <interactant intactId="EBI-19834">
        <id>Q01477</id>
        <label>UBP3</label>
    </interactant>
    <organismsDiffer>false</organismsDiffer>
    <experiments>4</experiments>
</comment>
<comment type="interaction">
    <interactant intactId="EBI-4308">
        <id>P25694</id>
    </interactant>
    <interactant intactId="EBI-27730">
        <id>Q04228</id>
        <label>UBX2</label>
    </interactant>
    <organismsDiffer>false</organismsDiffer>
    <experiments>16</experiments>
</comment>
<comment type="interaction">
    <interactant intactId="EBI-4308">
        <id>P25694</id>
    </interactant>
    <interactant intactId="EBI-35335">
        <id>Q12229</id>
        <label>UBX3</label>
    </interactant>
    <organismsDiffer>false</organismsDiffer>
    <experiments>4</experiments>
</comment>
<comment type="interaction">
    <interactant intactId="EBI-4308">
        <id>P25694</id>
    </interactant>
    <interactant intactId="EBI-28127">
        <id>P54730</id>
        <label>UBX4</label>
    </interactant>
    <organismsDiffer>false</organismsDiffer>
    <experiments>6</experiments>
</comment>
<comment type="interaction">
    <interactant intactId="EBI-4308">
        <id>P25694</id>
    </interactant>
    <interactant intactId="EBI-32041">
        <id>Q06682</id>
        <label>UBX5</label>
    </interactant>
    <organismsDiffer>false</organismsDiffer>
    <experiments>5</experiments>
</comment>
<comment type="interaction">
    <interactant intactId="EBI-4308">
        <id>P25694</id>
    </interactant>
    <interactant intactId="EBI-25866">
        <id>P47049</id>
        <label>UBX6</label>
    </interactant>
    <organismsDiffer>false</organismsDiffer>
    <experiments>3</experiments>
</comment>
<comment type="interaction">
    <interactant intactId="EBI-4308">
        <id>P25694</id>
    </interactant>
    <interactant intactId="EBI-21157">
        <id>P38349</id>
        <label>UBX7</label>
    </interactant>
    <organismsDiffer>false</organismsDiffer>
    <experiments>5</experiments>
</comment>
<comment type="interaction">
    <interactant intactId="EBI-4308">
        <id>P25694</id>
    </interactant>
    <interactant intactId="EBI-19997">
        <id>P53044</id>
        <label>UFD1</label>
    </interactant>
    <organismsDiffer>false</organismsDiffer>
    <experiments>14</experiments>
</comment>
<comment type="interaction">
    <interactant intactId="EBI-4308">
        <id>P25694</id>
    </interactant>
    <interactant intactId="EBI-20003">
        <id>P54860</id>
        <label>UFD2</label>
    </interactant>
    <organismsDiffer>false</organismsDiffer>
    <experiments>6</experiments>
</comment>
<comment type="interaction">
    <interactant intactId="EBI-4308">
        <id>P25694</id>
    </interactant>
    <interactant intactId="EBI-784329">
        <id>Q04311</id>
        <label>VMS1</label>
    </interactant>
    <organismsDiffer>false</organismsDiffer>
    <experiments>6</experiments>
</comment>
<comment type="subcellular location">
    <subcellularLocation>
        <location evidence="6">Microsome</location>
    </subcellularLocation>
    <subcellularLocation>
        <location evidence="20">Endoplasmic reticulum</location>
    </subcellularLocation>
    <subcellularLocation>
        <location evidence="20">Cytoplasm</location>
    </subcellularLocation>
    <text evidence="6">Bound loosely to components of the microsomal fraction.</text>
</comment>
<comment type="miscellaneous">
    <text evidence="11">Present with 78400 molecules/cell in log phase SD medium.</text>
</comment>
<comment type="similarity">
    <text evidence="31">Belongs to the AAA ATPase family.</text>
</comment>
<proteinExistence type="evidence at protein level"/>
<gene>
    <name evidence="30" type="primary">CDC48</name>
    <name evidence="33" type="ordered locus">YDL126C</name>
</gene>
<reference key="1">
    <citation type="journal article" date="1991" name="J. Cell Biol.">
        <title>Yeast cell cycle protein CDC48p shows full-length homology to the mammalian protein VCP and is a member of a protein family involved in secretion, peroxisome formation, and gene expression.</title>
        <authorList>
            <person name="Froehlich K.-U."/>
            <person name="Fries H.W."/>
            <person name="Ruediger M."/>
            <person name="Erdmann R."/>
            <person name="Botstein D."/>
            <person name="Mecke D."/>
        </authorList>
    </citation>
    <scope>NUCLEOTIDE SEQUENCE [GENOMIC DNA]</scope>
</reference>
<reference key="2">
    <citation type="submission" date="1996-07" db="EMBL/GenBank/DDBJ databases">
        <authorList>
            <person name="Froehlich K.-U."/>
        </authorList>
    </citation>
    <scope>SEQUENCE REVISION</scope>
</reference>
<reference key="3">
    <citation type="journal article" date="1997" name="Nature">
        <title>The nucleotide sequence of Saccharomyces cerevisiae chromosome IV.</title>
        <authorList>
            <person name="Jacq C."/>
            <person name="Alt-Moerbe J."/>
            <person name="Andre B."/>
            <person name="Arnold W."/>
            <person name="Bahr A."/>
            <person name="Ballesta J.P.G."/>
            <person name="Bargues M."/>
            <person name="Baron L."/>
            <person name="Becker A."/>
            <person name="Biteau N."/>
            <person name="Bloecker H."/>
            <person name="Blugeon C."/>
            <person name="Boskovic J."/>
            <person name="Brandt P."/>
            <person name="Brueckner M."/>
            <person name="Buitrago M.J."/>
            <person name="Coster F."/>
            <person name="Delaveau T."/>
            <person name="del Rey F."/>
            <person name="Dujon B."/>
            <person name="Eide L.G."/>
            <person name="Garcia-Cantalejo J.M."/>
            <person name="Goffeau A."/>
            <person name="Gomez-Peris A."/>
            <person name="Granotier C."/>
            <person name="Hanemann V."/>
            <person name="Hankeln T."/>
            <person name="Hoheisel J.D."/>
            <person name="Jaeger W."/>
            <person name="Jimenez A."/>
            <person name="Jonniaux J.-L."/>
            <person name="Kraemer C."/>
            <person name="Kuester H."/>
            <person name="Laamanen P."/>
            <person name="Legros Y."/>
            <person name="Louis E.J."/>
            <person name="Moeller-Rieker S."/>
            <person name="Monnet A."/>
            <person name="Moro M."/>
            <person name="Mueller-Auer S."/>
            <person name="Nussbaumer B."/>
            <person name="Paricio N."/>
            <person name="Paulin L."/>
            <person name="Perea J."/>
            <person name="Perez-Alonso M."/>
            <person name="Perez-Ortin J.E."/>
            <person name="Pohl T.M."/>
            <person name="Prydz H."/>
            <person name="Purnelle B."/>
            <person name="Rasmussen S.W."/>
            <person name="Remacha M.A."/>
            <person name="Revuelta J.L."/>
            <person name="Rieger M."/>
            <person name="Salom D."/>
            <person name="Saluz H.P."/>
            <person name="Saiz J.E."/>
            <person name="Saren A.-M."/>
            <person name="Schaefer M."/>
            <person name="Scharfe M."/>
            <person name="Schmidt E.R."/>
            <person name="Schneider C."/>
            <person name="Scholler P."/>
            <person name="Schwarz S."/>
            <person name="Soler-Mira A."/>
            <person name="Urrestarazu L.A."/>
            <person name="Verhasselt P."/>
            <person name="Vissers S."/>
            <person name="Voet M."/>
            <person name="Volckaert G."/>
            <person name="Wagner G."/>
            <person name="Wambutt R."/>
            <person name="Wedler E."/>
            <person name="Wedler H."/>
            <person name="Woelfl S."/>
            <person name="Harris D.E."/>
            <person name="Bowman S."/>
            <person name="Brown D."/>
            <person name="Churcher C.M."/>
            <person name="Connor R."/>
            <person name="Dedman K."/>
            <person name="Gentles S."/>
            <person name="Hamlin N."/>
            <person name="Hunt S."/>
            <person name="Jones L."/>
            <person name="McDonald S."/>
            <person name="Murphy L.D."/>
            <person name="Niblett D."/>
            <person name="Odell C."/>
            <person name="Oliver K."/>
            <person name="Rajandream M.A."/>
            <person name="Richards C."/>
            <person name="Shore L."/>
            <person name="Walsh S.V."/>
            <person name="Barrell B.G."/>
            <person name="Dietrich F.S."/>
            <person name="Mulligan J.T."/>
            <person name="Allen E."/>
            <person name="Araujo R."/>
            <person name="Aviles E."/>
            <person name="Berno A."/>
            <person name="Carpenter J."/>
            <person name="Chen E."/>
            <person name="Cherry J.M."/>
            <person name="Chung E."/>
            <person name="Duncan M."/>
            <person name="Hunicke-Smith S."/>
            <person name="Hyman R.W."/>
            <person name="Komp C."/>
            <person name="Lashkari D."/>
            <person name="Lew H."/>
            <person name="Lin D."/>
            <person name="Mosedale D."/>
            <person name="Nakahara K."/>
            <person name="Namath A."/>
            <person name="Oefner P."/>
            <person name="Oh C."/>
            <person name="Petel F.X."/>
            <person name="Roberts D."/>
            <person name="Schramm S."/>
            <person name="Schroeder M."/>
            <person name="Shogren T."/>
            <person name="Shroff N."/>
            <person name="Winant A."/>
            <person name="Yelton M.A."/>
            <person name="Botstein D."/>
            <person name="Davis R.W."/>
            <person name="Johnston M."/>
            <person name="Andrews S."/>
            <person name="Brinkman R."/>
            <person name="Cooper J."/>
            <person name="Ding H."/>
            <person name="Du Z."/>
            <person name="Favello A."/>
            <person name="Fulton L."/>
            <person name="Gattung S."/>
            <person name="Greco T."/>
            <person name="Hallsworth K."/>
            <person name="Hawkins J."/>
            <person name="Hillier L.W."/>
            <person name="Jier M."/>
            <person name="Johnson D."/>
            <person name="Johnston L."/>
            <person name="Kirsten J."/>
            <person name="Kucaba T."/>
            <person name="Langston Y."/>
            <person name="Latreille P."/>
            <person name="Le T."/>
            <person name="Mardis E."/>
            <person name="Menezes S."/>
            <person name="Miller N."/>
            <person name="Nhan M."/>
            <person name="Pauley A."/>
            <person name="Peluso D."/>
            <person name="Rifkin L."/>
            <person name="Riles L."/>
            <person name="Taich A."/>
            <person name="Trevaskis E."/>
            <person name="Vignati D."/>
            <person name="Wilcox L."/>
            <person name="Wohldman P."/>
            <person name="Vaudin M."/>
            <person name="Wilson R."/>
            <person name="Waterston R."/>
            <person name="Albermann K."/>
            <person name="Hani J."/>
            <person name="Heumann K."/>
            <person name="Kleine K."/>
            <person name="Mewes H.-W."/>
            <person name="Zollner A."/>
            <person name="Zaccaria P."/>
        </authorList>
    </citation>
    <scope>NUCLEOTIDE SEQUENCE [LARGE SCALE GENOMIC DNA]</scope>
    <source>
        <strain>ATCC 204508 / S288c</strain>
    </source>
</reference>
<reference key="4">
    <citation type="journal article" date="2014" name="G3 (Bethesda)">
        <title>The reference genome sequence of Saccharomyces cerevisiae: Then and now.</title>
        <authorList>
            <person name="Engel S.R."/>
            <person name="Dietrich F.S."/>
            <person name="Fisk D.G."/>
            <person name="Binkley G."/>
            <person name="Balakrishnan R."/>
            <person name="Costanzo M.C."/>
            <person name="Dwight S.S."/>
            <person name="Hitz B.C."/>
            <person name="Karra K."/>
            <person name="Nash R.S."/>
            <person name="Weng S."/>
            <person name="Wong E.D."/>
            <person name="Lloyd P."/>
            <person name="Skrzypek M.S."/>
            <person name="Miyasato S.R."/>
            <person name="Simison M."/>
            <person name="Cherry J.M."/>
        </authorList>
    </citation>
    <scope>GENOME REANNOTATION</scope>
    <source>
        <strain>ATCC 204508 / S288c</strain>
    </source>
</reference>
<reference key="5">
    <citation type="journal article" date="1982" name="Genetics">
        <title>Cold-sensitive cell-division-cycle mutants of yeast: isolation, properties, and pseudoreversion studies.</title>
        <authorList>
            <person name="Moir D."/>
            <person name="Stewart S.E."/>
            <person name="Osmond B.C."/>
            <person name="Botstein D."/>
        </authorList>
    </citation>
    <scope>GENE NAME</scope>
</reference>
<reference key="6">
    <citation type="journal article" date="2001" name="Cell">
        <title>Mobilization of processed, membrane-tethered SPT23 transcription factor by CDC48(UFD1/NPL4), a ubiquitin-selective chaperone.</title>
        <authorList>
            <person name="Rape M."/>
            <person name="Hoppe T."/>
            <person name="Gorr I."/>
            <person name="Kalocay M."/>
            <person name="Richly H."/>
            <person name="Jentsch S."/>
        </authorList>
    </citation>
    <scope>FUNCTION</scope>
    <scope>INTERACTION WITH NPL4</scope>
    <scope>SUBCELLULAR LOCATION</scope>
</reference>
<reference key="7">
    <citation type="journal article" date="2001" name="Mol. Biol. Cell">
        <title>The conserved npl4 protein complex mediates proteasome-dependent membrane-bound transcription factor activation.</title>
        <authorList>
            <person name="Hitchcock A.L."/>
            <person name="Krebber H."/>
            <person name="Frietze S."/>
            <person name="Lin A."/>
            <person name="Latterich M."/>
            <person name="Silver P.A."/>
        </authorList>
    </citation>
    <scope>INTERACTION WITH NPL4</scope>
</reference>
<reference key="8">
    <citation type="journal article" date="2002" name="Nat. Cell Biol.">
        <title>Protein dislocation from the ER requires polyubiquitination and the AAA-ATPase Cdc48.</title>
        <authorList>
            <person name="Jarosch E."/>
            <person name="Taxis C."/>
            <person name="Volkwein C."/>
            <person name="Bordallo J."/>
            <person name="Finley D."/>
            <person name="Wolf D.H."/>
            <person name="Sommer T."/>
        </authorList>
    </citation>
    <scope>FUNCTION</scope>
</reference>
<reference key="9">
    <citation type="journal article" date="2001" name="Nature">
        <title>The AAA ATPase Cdc48/p97 and its partners transport proteins from the ER into the cytosol.</title>
        <authorList>
            <person name="Ye Y."/>
            <person name="Meyer H.H."/>
            <person name="Rapoport T.A."/>
        </authorList>
    </citation>
    <scope>FUNCTION</scope>
</reference>
<reference key="10">
    <citation type="journal article" date="2002" name="EMBO J.">
        <title>Role of the ubiquitin-selective CDC48(UFD1/NPL4) chaperone (segregase) in ERAD of OLE1 and other substrates.</title>
        <authorList>
            <person name="Braun S."/>
            <person name="Matuschewski K."/>
            <person name="Rape M."/>
            <person name="Thoms S."/>
            <person name="Jentsch S."/>
        </authorList>
    </citation>
    <scope>FUNCTION</scope>
</reference>
<reference key="11">
    <citation type="journal article" date="2003" name="Cell">
        <title>The AAA-ATPase Cdc48/p97 regulates spindle disassembly at the end of mitosis.</title>
        <authorList>
            <person name="Cao K."/>
            <person name="Nakajima R."/>
            <person name="Meyer H.H."/>
            <person name="Zheng Y."/>
        </authorList>
    </citation>
    <scope>FUNCTION</scope>
    <scope>INTERACTION WITH ASE1 AND CDC5</scope>
</reference>
<reference key="12">
    <citation type="journal article" date="2003" name="Nature">
        <title>Global analysis of protein expression in yeast.</title>
        <authorList>
            <person name="Ghaemmaghami S."/>
            <person name="Huh W.-K."/>
            <person name="Bower K."/>
            <person name="Howson R.W."/>
            <person name="Belle A."/>
            <person name="Dephoure N."/>
            <person name="O'Shea E.K."/>
            <person name="Weissman J.S."/>
        </authorList>
    </citation>
    <scope>LEVEL OF PROTEIN EXPRESSION [LARGE SCALE ANALYSIS]</scope>
</reference>
<reference key="13">
    <citation type="journal article" date="2003" name="Nat. Biotechnol.">
        <title>A proteomics approach to understanding protein ubiquitination.</title>
        <authorList>
            <person name="Peng J."/>
            <person name="Schwartz D."/>
            <person name="Elias J.E."/>
            <person name="Thoreen C.C."/>
            <person name="Cheng D."/>
            <person name="Marsischky G."/>
            <person name="Roelofs J."/>
            <person name="Finley D."/>
            <person name="Gygi S.P."/>
        </authorList>
    </citation>
    <scope>UBIQUITINATION [LARGE SCALE ANALYSIS] AT LYS-594 AND LYS-673</scope>
    <scope>IDENTIFICATION BY MASS SPECTROMETRY</scope>
    <source>
        <strain>SUB592</strain>
    </source>
</reference>
<reference key="14">
    <citation type="journal article" date="2004" name="EMBO Rep.">
        <title>Shp1 and Ubx2 are adaptors of Cdc48 involved in ubiquitin-dependent protein degradation.</title>
        <authorList>
            <person name="Schuberth C."/>
            <person name="Richly H."/>
            <person name="Rumpf S."/>
            <person name="Buchberger A."/>
        </authorList>
    </citation>
    <scope>INTERACTION WITH UBX PROTEINS</scope>
</reference>
<reference key="15">
    <citation type="journal article" date="2006" name="Cell">
        <title>Distinct ubiquitin-ligase complexes define convergent pathways for the degradation of ER proteins.</title>
        <authorList>
            <person name="Carvalho P."/>
            <person name="Goder V."/>
            <person name="Rapoport T.A."/>
        </authorList>
    </citation>
    <scope>IDENTIFICATION IN CDC48-NPL4-UFD1 ATPASE COMPLEX</scope>
    <scope>INTERACTION WITH HRD1 COMPLEX</scope>
</reference>
<reference key="16">
    <citation type="journal article" date="2006" name="Mol. Cell">
        <title>Functional division of substrate processing cofactors of the ubiquitin-selective Cdc48 chaperone.</title>
        <authorList>
            <person name="Rumpf S."/>
            <person name="Jentsch S."/>
        </authorList>
    </citation>
    <scope>IDENTIFICATION IN A COMPLEX WITH NPL4; UFD1; SHP1 AND UFD2</scope>
    <scope>IDENTIFICATION IN A COMPLEX WITH NPL4; UFD1; SHP1; DOA1 AND OTU1</scope>
    <scope>INTERACTION WITH OTU1; UFD2 AND DOA1</scope>
</reference>
<reference key="17">
    <citation type="journal article" date="2006" name="Mol. Cell. Biol.">
        <title>Doa1 is a Cdc48 adapter that possesses a novel ubiquitin binding domain.</title>
        <authorList>
            <person name="Mullally J.E."/>
            <person name="Chernova T."/>
            <person name="Wilkinson K.D."/>
        </authorList>
    </citation>
    <scope>FUNCTION</scope>
    <scope>INTERACTION WITH DOA1</scope>
</reference>
<reference key="18">
    <citation type="journal article" date="2007" name="J. Proteome Res.">
        <title>Large-scale phosphorylation analysis of alpha-factor-arrested Saccharomyces cerevisiae.</title>
        <authorList>
            <person name="Li X."/>
            <person name="Gerber S.A."/>
            <person name="Rudner A.D."/>
            <person name="Beausoleil S.A."/>
            <person name="Haas W."/>
            <person name="Villen J."/>
            <person name="Elias J.E."/>
            <person name="Gygi S.P."/>
        </authorList>
    </citation>
    <scope>PHOSPHORYLATION [LARGE SCALE ANALYSIS] AT SER-519 AND SER-770</scope>
    <scope>IDENTIFICATION BY MASS SPECTROMETRY [LARGE SCALE ANALYSIS]</scope>
    <source>
        <strain>ADR376</strain>
    </source>
</reference>
<reference key="19">
    <citation type="journal article" date="2007" name="Proc. Natl. Acad. Sci. U.S.A.">
        <title>Analysis of phosphorylation sites on proteins from Saccharomyces cerevisiae by electron transfer dissociation (ETD) mass spectrometry.</title>
        <authorList>
            <person name="Chi A."/>
            <person name="Huttenhower C."/>
            <person name="Geer L.Y."/>
            <person name="Coon J.J."/>
            <person name="Syka J.E.P."/>
            <person name="Bai D.L."/>
            <person name="Shabanowitz J."/>
            <person name="Burke D.J."/>
            <person name="Troyanskaya O.G."/>
            <person name="Hunt D.F."/>
        </authorList>
    </citation>
    <scope>PHOSPHORYLATION [LARGE SCALE ANALYSIS] AT SER-770</scope>
    <scope>IDENTIFICATION BY MASS SPECTROMETRY [LARGE SCALE ANALYSIS]</scope>
</reference>
<reference key="20">
    <citation type="journal article" date="2008" name="Mol. Cell. Proteomics">
        <title>A multidimensional chromatography technology for in-depth phosphoproteome analysis.</title>
        <authorList>
            <person name="Albuquerque C.P."/>
            <person name="Smolka M.B."/>
            <person name="Payne S.H."/>
            <person name="Bafna V."/>
            <person name="Eng J."/>
            <person name="Zhou H."/>
        </authorList>
    </citation>
    <scope>PHOSPHORYLATION [LARGE SCALE ANALYSIS] AT SER-472 AND THR-735</scope>
    <scope>IDENTIFICATION BY MASS SPECTROMETRY [LARGE SCALE ANALYSIS]</scope>
</reference>
<reference key="21">
    <citation type="journal article" date="2009" name="Proc. Natl. Acad. Sci. U.S.A.">
        <title>An Armadillo motif in Ufd3 interacts with Cdc48 and is involved in ubiquitin homeostasis and protein degradation.</title>
        <authorList>
            <person name="Zhao G."/>
            <person name="Li G."/>
            <person name="Schindelin H."/>
            <person name="Lennarz W.J."/>
        </authorList>
    </citation>
    <scope>INTERACTION WITH DOA1</scope>
</reference>
<reference key="22">
    <citation type="journal article" date="2009" name="Science">
        <title>Global analysis of Cdk1 substrate phosphorylation sites provides insights into evolution.</title>
        <authorList>
            <person name="Holt L.J."/>
            <person name="Tuch B.B."/>
            <person name="Villen J."/>
            <person name="Johnson A.D."/>
            <person name="Gygi S.P."/>
            <person name="Morgan D.O."/>
        </authorList>
    </citation>
    <scope>PHOSPHORYLATION [LARGE SCALE ANALYSIS] AT SER-519 AND THR-735</scope>
    <scope>IDENTIFICATION BY MASS SPECTROMETRY [LARGE SCALE ANALYSIS]</scope>
</reference>
<reference key="23">
    <citation type="journal article" date="2010" name="EMBO Rep.">
        <title>Cdc48 and Ufd3, new partners of the ubiquitin protease Ubp3, are required for ribophagy.</title>
        <authorList>
            <person name="Ossareh-Nazari B."/>
            <person name="Bonizec M."/>
            <person name="Cohen M."/>
            <person name="Dokudovskaya S."/>
            <person name="Delalande F."/>
            <person name="Schaeffer C."/>
            <person name="Van Dorsselaer A."/>
            <person name="Dargemont C."/>
        </authorList>
    </citation>
    <scope>FUNCTION</scope>
    <scope>IDENTIFICATION IN A COMPLEX WITH UBP3; BRE5 AND DOA1</scope>
    <scope>INTERACTION WITH UBP3 AND DOA1</scope>
</reference>
<reference key="24">
    <citation type="journal article" date="2010" name="Mol. Cell">
        <title>A stress-responsive system for mitochondrial protein degradation.</title>
        <authorList>
            <person name="Heo J.M."/>
            <person name="Livnat-Levanon N."/>
            <person name="Taylor E.B."/>
            <person name="Jones K.T."/>
            <person name="Dephoure N."/>
            <person name="Ring J."/>
            <person name="Xie J."/>
            <person name="Brodsky J.L."/>
            <person name="Madeo F."/>
            <person name="Gygi S.P."/>
            <person name="Ashrafi K."/>
            <person name="Glickman M.H."/>
            <person name="Rutter J."/>
        </authorList>
    </citation>
    <scope>FUNCTION</scope>
    <scope>INTERACTION WITH VMS1</scope>
</reference>
<reference key="25">
    <citation type="journal article" date="2011" name="J. Biol. Chem.">
        <title>A Cdc48p-associated factor modulates endoplasmic reticulum-associated degradation, cell stress, and ubiquitinated protein homeostasis.</title>
        <authorList>
            <person name="Tran J.R."/>
            <person name="Tomsic L.R."/>
            <person name="Brodsky J.L."/>
        </authorList>
    </citation>
    <scope>FUNCTION</scope>
    <scope>SUBCELLULAR LOCATION</scope>
    <scope>INTERACTION WITH VMS1</scope>
</reference>
<reference key="26">
    <citation type="journal article" date="2011" name="J. Biol. Chem.">
        <title>Positive cooperativity of the p97 AAA ATPase is critical for essential functions.</title>
        <authorList>
            <person name="Nishikori S."/>
            <person name="Esaki M."/>
            <person name="Yamanaka K."/>
            <person name="Sugimoto S."/>
            <person name="Ogura T."/>
        </authorList>
    </citation>
    <scope>FUNCTION</scope>
    <scope>CATALYTIC ACTIVITY</scope>
    <scope>MUTAGENESIS OF LYS-261; GLU-315; ASN-358; ARG-369; PRO-471; ARG-475; LYS-534; GLU-588 AND ARG-645</scope>
</reference>
<reference key="27">
    <citation type="journal article" date="2012" name="Cell">
        <title>A ribosome-bound quality control complex triggers degradation of nascent peptides and signals translation stress.</title>
        <authorList>
            <person name="Brandman O."/>
            <person name="Stewart-Ornstein J."/>
            <person name="Wong D."/>
            <person name="Larson A."/>
            <person name="Williams C.C."/>
            <person name="Li G.W."/>
            <person name="Zhou S."/>
            <person name="King D."/>
            <person name="Shen P.S."/>
            <person name="Weibezahn J."/>
            <person name="Dunn J.G."/>
            <person name="Rouskin S."/>
            <person name="Inada T."/>
            <person name="Frost A."/>
            <person name="Weissman J.S."/>
        </authorList>
    </citation>
    <scope>FUNCTION</scope>
    <scope>SUBUNIT</scope>
</reference>
<reference key="28">
    <citation type="journal article" date="2012" name="Proc. Natl. Acad. Sci. U.S.A.">
        <title>N-terminal acetylome analyses and functional insights of the N-terminal acetyltransferase NatB.</title>
        <authorList>
            <person name="Van Damme P."/>
            <person name="Lasa M."/>
            <person name="Polevoda B."/>
            <person name="Gazquez C."/>
            <person name="Elosegui-Artola A."/>
            <person name="Kim D.S."/>
            <person name="De Juan-Pardo E."/>
            <person name="Demeyer K."/>
            <person name="Hole K."/>
            <person name="Larrea E."/>
            <person name="Timmerman E."/>
            <person name="Prieto J."/>
            <person name="Arnesen T."/>
            <person name="Sherman F."/>
            <person name="Gevaert K."/>
            <person name="Aldabe R."/>
        </authorList>
    </citation>
    <scope>IDENTIFICATION BY MASS SPECTROMETRY [LARGE SCALE ANALYSIS]</scope>
</reference>
<reference key="29">
    <citation type="journal article" date="2012" name="Proteomics">
        <title>Sites of ubiquitin attachment in Saccharomyces cerevisiae.</title>
        <authorList>
            <person name="Starita L.M."/>
            <person name="Lo R.S."/>
            <person name="Eng J.K."/>
            <person name="von Haller P.D."/>
            <person name="Fields S."/>
        </authorList>
    </citation>
    <scope>UBIQUITINATION [LARGE SCALE ANALYSIS] AT LYS-305; LYS-322; LYS-346; LYS-522 AND LYS-539</scope>
    <scope>IDENTIFICATION BY MASS SPECTROMETRY [LARGE SCALE ANALYSIS]</scope>
</reference>
<reference key="30">
    <citation type="journal article" date="2013" name="Proc. Natl. Acad. Sci. U.S.A.">
        <title>Cdc48-associated complex bound to 60S particles is required for the clearance of aberrant translation products.</title>
        <authorList>
            <person name="Defenouillere Q."/>
            <person name="Yao Y."/>
            <person name="Mouaikel J."/>
            <person name="Namane A."/>
            <person name="Galopier A."/>
            <person name="Decourty L."/>
            <person name="Doyen A."/>
            <person name="Malabat C."/>
            <person name="Saveanu C."/>
            <person name="Jacquier A."/>
            <person name="Fromont-Racine M."/>
        </authorList>
    </citation>
    <scope>SUBUNIT</scope>
</reference>
<reference key="31">
    <citation type="journal article" date="2014" name="Genes Cells">
        <title>Protein quality control systems associated with no-go and nonstop mRNA surveillance in yeast.</title>
        <authorList>
            <person name="Matsuda R."/>
            <person name="Ikeuchi K."/>
            <person name="Nomura S."/>
            <person name="Inada T."/>
        </authorList>
    </citation>
    <scope>FUNCTION</scope>
</reference>
<reference key="32">
    <citation type="journal article" date="2016" name="J. Cell Biol.">
        <title>Doa1 targets ubiquitinated substrates for mitochondria-associated degradation.</title>
        <authorList>
            <person name="Wu X."/>
            <person name="Li L."/>
            <person name="Jiang H."/>
        </authorList>
    </citation>
    <scope>FUNCTION</scope>
    <scope>INTERACTION WITH DOA1</scope>
</reference>
<reference key="33">
    <citation type="journal article" date="2018" name="Elife">
        <title>Sorting of a multi-subunit ubiquitin ligase complex in the endolysosome system.</title>
        <authorList>
            <person name="Yang X."/>
            <person name="Arines F.M."/>
            <person name="Zhang W."/>
            <person name="Li M."/>
        </authorList>
    </citation>
    <scope>FUNCTION</scope>
    <scope>SUBCELLULAR LOCATION</scope>
    <scope>SUBUNIT</scope>
</reference>
<reference key="34">
    <citation type="journal article" date="2019" name="Mol. Cell">
        <title>Msp1 clears mistargeted proteins by facilitating their transfer from mitochondria to the ER.</title>
        <authorList>
            <person name="Matsumoto S."/>
            <person name="Nakatsukasa K."/>
            <person name="Kakuta C."/>
            <person name="Tamura Y."/>
            <person name="Esaki M."/>
            <person name="Endo T."/>
        </authorList>
    </citation>
    <scope>FUNCTION</scope>
</reference>
<reference evidence="34 35 36" key="35">
    <citation type="journal article" date="2019" name="Science">
        <title>Substrate processing by the Cdc48 ATPase complex is initiated by ubiquitin unfolding.</title>
        <authorList>
            <person name="Twomey E.C."/>
            <person name="Ji Z."/>
            <person name="Wales T.E."/>
            <person name="Bodnar N.O."/>
            <person name="Ficarro S.B."/>
            <person name="Marto J.A."/>
            <person name="Engen J.R."/>
            <person name="Rapoport T.A."/>
        </authorList>
    </citation>
    <scope>STRUCTURE BY ELECTRON MICROSCOPY (3.70 ANGSTROMS) IN COMPLEX WITH UFD1/NPL4 AND POLYUBIQUITINATED SUBSTRATE</scope>
    <scope>FUNCTION</scope>
</reference>
<reference evidence="37 38" key="36">
    <citation type="journal article" date="2019" name="Science">
        <title>Structure of the Cdc48 segregase in the act of unfolding an authentic substrate.</title>
        <authorList>
            <person name="Cooney I."/>
            <person name="Han H."/>
            <person name="Stewart M.G."/>
            <person name="Carson R.H."/>
            <person name="Hansen D.T."/>
            <person name="Iwasa J.H."/>
            <person name="Price J.C."/>
            <person name="Hill C.P."/>
            <person name="Shen P.S."/>
        </authorList>
    </citation>
    <scope>STRUCTURE BY ELECTRON MICROSCOPY (3.70 ANGSTROMS) IN COMPLEX WITH ADAPTER SHP1 AND POLYUBIQUITINATED SUBSTRATE</scope>
    <scope>FUNCTION</scope>
</reference>
<keyword id="KW-0002">3D-structure</keyword>
<keyword id="KW-0067">ATP-binding</keyword>
<keyword id="KW-0131">Cell cycle</keyword>
<keyword id="KW-0143">Chaperone</keyword>
<keyword id="KW-0963">Cytoplasm</keyword>
<keyword id="KW-0256">Endoplasmic reticulum</keyword>
<keyword id="KW-0378">Hydrolase</keyword>
<keyword id="KW-1017">Isopeptide bond</keyword>
<keyword id="KW-0492">Microsome</keyword>
<keyword id="KW-0547">Nucleotide-binding</keyword>
<keyword id="KW-0597">Phosphoprotein</keyword>
<keyword id="KW-0653">Protein transport</keyword>
<keyword id="KW-1185">Reference proteome</keyword>
<keyword id="KW-0677">Repeat</keyword>
<keyword id="KW-0813">Transport</keyword>
<keyword id="KW-0832">Ubl conjugation</keyword>
<name>CDC48_YEAST</name>
<evidence type="ECO:0000250" key="1">
    <source>
        <dbReference type="UniProtKB" id="P54811"/>
    </source>
</evidence>
<evidence type="ECO:0000250" key="2">
    <source>
        <dbReference type="UniProtKB" id="P55072"/>
    </source>
</evidence>
<evidence type="ECO:0000250" key="3">
    <source>
        <dbReference type="UniProtKB" id="Q01853"/>
    </source>
</evidence>
<evidence type="ECO:0000256" key="4">
    <source>
        <dbReference type="SAM" id="MobiDB-lite"/>
    </source>
</evidence>
<evidence type="ECO:0000269" key="5">
    <source>
    </source>
</evidence>
<evidence type="ECO:0000269" key="6">
    <source>
    </source>
</evidence>
<evidence type="ECO:0000269" key="7">
    <source>
    </source>
</evidence>
<evidence type="ECO:0000269" key="8">
    <source>
    </source>
</evidence>
<evidence type="ECO:0000269" key="9">
    <source>
    </source>
</evidence>
<evidence type="ECO:0000269" key="10">
    <source>
    </source>
</evidence>
<evidence type="ECO:0000269" key="11">
    <source>
    </source>
</evidence>
<evidence type="ECO:0000269" key="12">
    <source>
    </source>
</evidence>
<evidence type="ECO:0000269" key="13">
    <source>
    </source>
</evidence>
<evidence type="ECO:0000269" key="14">
    <source>
    </source>
</evidence>
<evidence type="ECO:0000269" key="15">
    <source>
    </source>
</evidence>
<evidence type="ECO:0000269" key="16">
    <source>
    </source>
</evidence>
<evidence type="ECO:0000269" key="17">
    <source>
    </source>
</evidence>
<evidence type="ECO:0000269" key="18">
    <source>
    </source>
</evidence>
<evidence type="ECO:0000269" key="19">
    <source>
    </source>
</evidence>
<evidence type="ECO:0000269" key="20">
    <source>
    </source>
</evidence>
<evidence type="ECO:0000269" key="21">
    <source>
    </source>
</evidence>
<evidence type="ECO:0000269" key="22">
    <source>
    </source>
</evidence>
<evidence type="ECO:0000269" key="23">
    <source>
    </source>
</evidence>
<evidence type="ECO:0000269" key="24">
    <source>
    </source>
</evidence>
<evidence type="ECO:0000269" key="25">
    <source>
    </source>
</evidence>
<evidence type="ECO:0000269" key="26">
    <source>
    </source>
</evidence>
<evidence type="ECO:0000269" key="27">
    <source>
    </source>
</evidence>
<evidence type="ECO:0000269" key="28">
    <source>
    </source>
</evidence>
<evidence type="ECO:0000269" key="29">
    <source>
    </source>
</evidence>
<evidence type="ECO:0000303" key="30">
    <source>
    </source>
</evidence>
<evidence type="ECO:0000305" key="31"/>
<evidence type="ECO:0000305" key="32">
    <source>
    </source>
</evidence>
<evidence type="ECO:0000312" key="33">
    <source>
        <dbReference type="SGD" id="S000002284"/>
    </source>
</evidence>
<evidence type="ECO:0007744" key="34">
    <source>
        <dbReference type="PDB" id="6OA9"/>
    </source>
</evidence>
<evidence type="ECO:0007744" key="35">
    <source>
        <dbReference type="PDB" id="6OAA"/>
    </source>
</evidence>
<evidence type="ECO:0007744" key="36">
    <source>
        <dbReference type="PDB" id="6OAB"/>
    </source>
</evidence>
<evidence type="ECO:0007744" key="37">
    <source>
        <dbReference type="PDB" id="6OMB"/>
    </source>
</evidence>
<evidence type="ECO:0007744" key="38">
    <source>
        <dbReference type="PDB" id="6OPC"/>
    </source>
</evidence>
<evidence type="ECO:0007744" key="39">
    <source>
    </source>
</evidence>
<evidence type="ECO:0007744" key="40">
    <source>
    </source>
</evidence>
<evidence type="ECO:0007744" key="41">
    <source>
    </source>
</evidence>
<evidence type="ECO:0007744" key="42">
    <source>
    </source>
</evidence>
<evidence type="ECO:0007744" key="43">
    <source>
    </source>
</evidence>
<evidence type="ECO:0007829" key="44">
    <source>
        <dbReference type="PDB" id="8DAR"/>
    </source>
</evidence>
<evidence type="ECO:0007829" key="45">
    <source>
        <dbReference type="PDB" id="8DAS"/>
    </source>
</evidence>
<evidence type="ECO:0007829" key="46">
    <source>
        <dbReference type="PDB" id="8DAV"/>
    </source>
</evidence>
<accession>P25694</accession>
<accession>D6VRM4</accession>
<dbReference type="EC" id="3.6.4.6" evidence="21"/>
<dbReference type="EMBL" id="X56956">
    <property type="protein sequence ID" value="CAA40276.1"/>
    <property type="molecule type" value="Genomic_DNA"/>
</dbReference>
<dbReference type="EMBL" id="Z74174">
    <property type="protein sequence ID" value="CAA98694.1"/>
    <property type="molecule type" value="Genomic_DNA"/>
</dbReference>
<dbReference type="EMBL" id="BK006938">
    <property type="protein sequence ID" value="DAA11734.1"/>
    <property type="molecule type" value="Genomic_DNA"/>
</dbReference>
<dbReference type="PIR" id="S67669">
    <property type="entry name" value="S67669"/>
</dbReference>
<dbReference type="RefSeq" id="NP_010157.1">
    <property type="nucleotide sequence ID" value="NM_001180185.1"/>
</dbReference>
<dbReference type="PDB" id="6OA9">
    <property type="method" value="EM"/>
    <property type="resolution" value="3.90 A"/>
    <property type="chains" value="A/B/C/D/E/F=1-835"/>
</dbReference>
<dbReference type="PDB" id="6OAA">
    <property type="method" value="EM"/>
    <property type="resolution" value="4.10 A"/>
    <property type="chains" value="B/C/D/E=1-835"/>
</dbReference>
<dbReference type="PDB" id="6OAB">
    <property type="method" value="EM"/>
    <property type="resolution" value="3.60 A"/>
    <property type="chains" value="A/B/C/D/E=1-835"/>
</dbReference>
<dbReference type="PDB" id="6OMB">
    <property type="method" value="EM"/>
    <property type="resolution" value="3.70 A"/>
    <property type="chains" value="A/B/C/D/E=1-835"/>
</dbReference>
<dbReference type="PDB" id="6OPC">
    <property type="method" value="EM"/>
    <property type="resolution" value="3.70 A"/>
    <property type="chains" value="A/B/C/D/E/F=1-835"/>
</dbReference>
<dbReference type="PDB" id="8DAR">
    <property type="method" value="EM"/>
    <property type="resolution" value="3.00 A"/>
    <property type="chains" value="A/B/C/D/E/F=1-835"/>
</dbReference>
<dbReference type="PDB" id="8DAS">
    <property type="method" value="EM"/>
    <property type="resolution" value="3.50 A"/>
    <property type="chains" value="A/B/C/D/E/F=1-835"/>
</dbReference>
<dbReference type="PDB" id="8DAT">
    <property type="method" value="EM"/>
    <property type="resolution" value="3.80 A"/>
    <property type="chains" value="A/B/C/D/E/F=1-835"/>
</dbReference>
<dbReference type="PDB" id="8DAU">
    <property type="method" value="EM"/>
    <property type="resolution" value="3.70 A"/>
    <property type="chains" value="A/B/C/D/E/F=1-835"/>
</dbReference>
<dbReference type="PDB" id="8DAV">
    <property type="method" value="EM"/>
    <property type="resolution" value="3.50 A"/>
    <property type="chains" value="A/B/C/D/E/F=1-835"/>
</dbReference>
<dbReference type="PDB" id="8DAW">
    <property type="method" value="EM"/>
    <property type="resolution" value="3.60 A"/>
    <property type="chains" value="A/B/C/D/E/F=1-835"/>
</dbReference>
<dbReference type="PDB" id="8U7T">
    <property type="method" value="EM"/>
    <property type="resolution" value="3.30 A"/>
    <property type="chains" value="A/B/C/D/E/F=1-835"/>
</dbReference>
<dbReference type="PDB" id="8U8I">
    <property type="method" value="EM"/>
    <property type="resolution" value="3.50 A"/>
    <property type="chains" value="A/B/C/D/E/F=1-835"/>
</dbReference>
<dbReference type="PDB" id="8U9C">
    <property type="method" value="EM"/>
    <property type="resolution" value="3.70 A"/>
    <property type="chains" value="A/B/C/D/E/F=1-835"/>
</dbReference>
<dbReference type="PDB" id="8U9P">
    <property type="method" value="EM"/>
    <property type="resolution" value="3.20 A"/>
    <property type="chains" value="A/B/C/D/E/F=1-835"/>
</dbReference>
<dbReference type="PDB" id="8U9Q">
    <property type="method" value="EM"/>
    <property type="resolution" value="4.30 A"/>
    <property type="chains" value="A/B/C/D/E/F=1-835"/>
</dbReference>
<dbReference type="PDB" id="8U9Z">
    <property type="method" value="EM"/>
    <property type="resolution" value="3.80 A"/>
    <property type="chains" value="A/B/C/D/E/F=1-835"/>
</dbReference>
<dbReference type="PDB" id="8UA0">
    <property type="method" value="EM"/>
    <property type="resolution" value="3.50 A"/>
    <property type="chains" value="A/B/C/D/E/F=1-835"/>
</dbReference>
<dbReference type="PDB" id="8UA1">
    <property type="method" value="EM"/>
    <property type="resolution" value="3.40 A"/>
    <property type="chains" value="A/B/C/D/E/F=1-835"/>
</dbReference>
<dbReference type="PDB" id="8UAA">
    <property type="method" value="EM"/>
    <property type="resolution" value="3.40 A"/>
    <property type="chains" value="A/B/C/D/E/F=1-835"/>
</dbReference>
<dbReference type="PDB" id="8UB4">
    <property type="method" value="EM"/>
    <property type="resolution" value="2.90 A"/>
    <property type="chains" value="A/B/C/D/E/F=1-835"/>
</dbReference>
<dbReference type="PDBsum" id="6OA9"/>
<dbReference type="PDBsum" id="6OAA"/>
<dbReference type="PDBsum" id="6OAB"/>
<dbReference type="PDBsum" id="6OMB"/>
<dbReference type="PDBsum" id="6OPC"/>
<dbReference type="PDBsum" id="8DAR"/>
<dbReference type="PDBsum" id="8DAS"/>
<dbReference type="PDBsum" id="8DAT"/>
<dbReference type="PDBsum" id="8DAU"/>
<dbReference type="PDBsum" id="8DAV"/>
<dbReference type="PDBsum" id="8DAW"/>
<dbReference type="PDBsum" id="8U7T"/>
<dbReference type="PDBsum" id="8U8I"/>
<dbReference type="PDBsum" id="8U9C"/>
<dbReference type="PDBsum" id="8U9P"/>
<dbReference type="PDBsum" id="8U9Q"/>
<dbReference type="PDBsum" id="8U9Z"/>
<dbReference type="PDBsum" id="8UA0"/>
<dbReference type="PDBsum" id="8UA1"/>
<dbReference type="PDBsum" id="8UAA"/>
<dbReference type="PDBsum" id="8UB4"/>
<dbReference type="EMDB" id="EMD-0665"/>
<dbReference type="EMDB" id="EMD-0666"/>
<dbReference type="EMDB" id="EMD-20000"/>
<dbReference type="EMDB" id="EMD-20124"/>
<dbReference type="EMDB" id="EMD-20149"/>
<dbReference type="EMDB" id="EMD-27273"/>
<dbReference type="EMDB" id="EMD-27274"/>
<dbReference type="EMDB" id="EMD-27275"/>
<dbReference type="EMDB" id="EMD-27276"/>
<dbReference type="EMDB" id="EMD-27277"/>
<dbReference type="EMDB" id="EMD-27278"/>
<dbReference type="EMDB" id="EMD-41992"/>
<dbReference type="EMDB" id="EMD-42025"/>
<dbReference type="EMDB" id="EMD-42032"/>
<dbReference type="EMDB" id="EMD-42038"/>
<dbReference type="EMDB" id="EMD-42039"/>
<dbReference type="EMDB" id="EMD-42042"/>
<dbReference type="EMDB" id="EMD-42043"/>
<dbReference type="EMDB" id="EMD-42047"/>
<dbReference type="EMDB" id="EMD-42057"/>
<dbReference type="EMDB" id="EMD-42076"/>
<dbReference type="SMR" id="P25694"/>
<dbReference type="BioGRID" id="31937">
    <property type="interactions" value="955"/>
</dbReference>
<dbReference type="ComplexPortal" id="CPX-1323">
    <property type="entry name" value="CDC48-RAD23-UFD2 complex"/>
</dbReference>
<dbReference type="ComplexPortal" id="CPX-2946">
    <property type="entry name" value="CDC48-NPL4-UFD1 AAA ATPase complex"/>
</dbReference>
<dbReference type="ComplexPortal" id="CPX-3069">
    <property type="entry name" value="CDC48-NPL4-VMS1 AAA ATPase complex"/>
</dbReference>
<dbReference type="ComplexPortal" id="CPX-3265">
    <property type="entry name" value="Ribosome quality control complex"/>
</dbReference>
<dbReference type="ComplexPortal" id="CPX-8127">
    <property type="entry name" value="CDC48-SHP1 AAA ATPase complex"/>
</dbReference>
<dbReference type="DIP" id="DIP-2704N"/>
<dbReference type="FunCoup" id="P25694">
    <property type="interactions" value="1797"/>
</dbReference>
<dbReference type="IntAct" id="P25694">
    <property type="interactions" value="188"/>
</dbReference>
<dbReference type="MINT" id="P25694"/>
<dbReference type="STRING" id="4932.YDL126C"/>
<dbReference type="TCDB" id="3.A.16.1.2">
    <property type="family name" value="the endoplasmic reticular retrotranslocon (er-rt) family"/>
</dbReference>
<dbReference type="CarbonylDB" id="P25694"/>
<dbReference type="iPTMnet" id="P25694"/>
<dbReference type="PaxDb" id="4932-YDL126C"/>
<dbReference type="PeptideAtlas" id="P25694"/>
<dbReference type="EnsemblFungi" id="YDL126C_mRNA">
    <property type="protein sequence ID" value="YDL126C"/>
    <property type="gene ID" value="YDL126C"/>
</dbReference>
<dbReference type="GeneID" id="851431"/>
<dbReference type="KEGG" id="sce:YDL126C"/>
<dbReference type="AGR" id="SGD:S000002284"/>
<dbReference type="SGD" id="S000002284">
    <property type="gene designation" value="CDC48"/>
</dbReference>
<dbReference type="VEuPathDB" id="FungiDB:YDL126C"/>
<dbReference type="eggNOG" id="KOG0730">
    <property type="taxonomic scope" value="Eukaryota"/>
</dbReference>
<dbReference type="GeneTree" id="ENSGT00940000165417"/>
<dbReference type="HOGENOM" id="CLU_000688_12_2_1"/>
<dbReference type="InParanoid" id="P25694"/>
<dbReference type="OMA" id="VWPAYPE"/>
<dbReference type="OrthoDB" id="27435at2759"/>
<dbReference type="BioCyc" id="YEAST:G3O-29525-MONOMER"/>
<dbReference type="Reactome" id="R-SCE-110320">
    <property type="pathway name" value="Translesion Synthesis by POLH"/>
</dbReference>
<dbReference type="Reactome" id="R-SCE-3371511">
    <property type="pathway name" value="HSF1 activation"/>
</dbReference>
<dbReference type="Reactome" id="R-SCE-5689896">
    <property type="pathway name" value="Ovarian tumor domain proteases"/>
</dbReference>
<dbReference type="Reactome" id="R-SCE-6798695">
    <property type="pathway name" value="Neutrophil degranulation"/>
</dbReference>
<dbReference type="Reactome" id="R-SCE-8876725">
    <property type="pathway name" value="Protein methylation"/>
</dbReference>
<dbReference type="Reactome" id="R-SCE-8951664">
    <property type="pathway name" value="Neddylation"/>
</dbReference>
<dbReference type="Reactome" id="R-SCE-9755511">
    <property type="pathway name" value="KEAP1-NFE2L2 pathway"/>
</dbReference>
<dbReference type="BioGRID-ORCS" id="851431">
    <property type="hits" value="7 hits in 10 CRISPR screens"/>
</dbReference>
<dbReference type="PRO" id="PR:P25694"/>
<dbReference type="Proteomes" id="UP000002311">
    <property type="component" value="Chromosome IV"/>
</dbReference>
<dbReference type="RNAct" id="P25694">
    <property type="molecule type" value="protein"/>
</dbReference>
<dbReference type="GO" id="GO:0036266">
    <property type="term" value="C:Cdc48p-Npl4p-Vms1p AAA ATPase complex"/>
    <property type="evidence" value="ECO:0000314"/>
    <property type="project" value="SGD"/>
</dbReference>
<dbReference type="GO" id="GO:0005829">
    <property type="term" value="C:cytosol"/>
    <property type="evidence" value="ECO:0000314"/>
    <property type="project" value="SGD"/>
</dbReference>
<dbReference type="GO" id="GO:0000837">
    <property type="term" value="C:Doa10p ubiquitin ligase complex"/>
    <property type="evidence" value="ECO:0000314"/>
    <property type="project" value="SGD"/>
</dbReference>
<dbReference type="GO" id="GO:0005789">
    <property type="term" value="C:endoplasmic reticulum membrane"/>
    <property type="evidence" value="ECO:0000314"/>
    <property type="project" value="SGD"/>
</dbReference>
<dbReference type="GO" id="GO:0000839">
    <property type="term" value="C:Hrd1p ubiquitin ligase ERAD-L complex"/>
    <property type="evidence" value="ECO:0000314"/>
    <property type="project" value="SGD"/>
</dbReference>
<dbReference type="GO" id="GO:0043332">
    <property type="term" value="C:mating projection tip"/>
    <property type="evidence" value="ECO:0007005"/>
    <property type="project" value="SGD"/>
</dbReference>
<dbReference type="GO" id="GO:0005739">
    <property type="term" value="C:mitochondrion"/>
    <property type="evidence" value="ECO:0007005"/>
    <property type="project" value="SGD"/>
</dbReference>
<dbReference type="GO" id="GO:0005634">
    <property type="term" value="C:nucleus"/>
    <property type="evidence" value="ECO:0000314"/>
    <property type="project" value="SGD"/>
</dbReference>
<dbReference type="GO" id="GO:0030894">
    <property type="term" value="C:replisome"/>
    <property type="evidence" value="ECO:0000314"/>
    <property type="project" value="SGD"/>
</dbReference>
<dbReference type="GO" id="GO:1990112">
    <property type="term" value="C:RQC complex"/>
    <property type="evidence" value="ECO:0000314"/>
    <property type="project" value="SGD"/>
</dbReference>
<dbReference type="GO" id="GO:0034098">
    <property type="term" value="C:VCP-NPL4-UFD1 AAA ATPase complex"/>
    <property type="evidence" value="ECO:0000314"/>
    <property type="project" value="SGD"/>
</dbReference>
<dbReference type="GO" id="GO:0005524">
    <property type="term" value="F:ATP binding"/>
    <property type="evidence" value="ECO:0007669"/>
    <property type="project" value="UniProtKB-KW"/>
</dbReference>
<dbReference type="GO" id="GO:0016887">
    <property type="term" value="F:ATP hydrolysis activity"/>
    <property type="evidence" value="ECO:0000314"/>
    <property type="project" value="SGD"/>
</dbReference>
<dbReference type="GO" id="GO:0042802">
    <property type="term" value="F:identical protein binding"/>
    <property type="evidence" value="ECO:0000353"/>
    <property type="project" value="IntAct"/>
</dbReference>
<dbReference type="GO" id="GO:0031593">
    <property type="term" value="F:polyubiquitin modification-dependent protein binding"/>
    <property type="evidence" value="ECO:0000314"/>
    <property type="project" value="UniProt"/>
</dbReference>
<dbReference type="GO" id="GO:0019888">
    <property type="term" value="F:protein phosphatase regulator activity"/>
    <property type="evidence" value="ECO:0000315"/>
    <property type="project" value="SGD"/>
</dbReference>
<dbReference type="GO" id="GO:0043130">
    <property type="term" value="F:ubiquitin binding"/>
    <property type="evidence" value="ECO:0000314"/>
    <property type="project" value="SGD"/>
</dbReference>
<dbReference type="GO" id="GO:0046034">
    <property type="term" value="P:ATP metabolic process"/>
    <property type="evidence" value="ECO:0000315"/>
    <property type="project" value="ParkinsonsUK-UCL"/>
</dbReference>
<dbReference type="GO" id="GO:0097352">
    <property type="term" value="P:autophagosome maturation"/>
    <property type="evidence" value="ECO:0000318"/>
    <property type="project" value="GO_Central"/>
</dbReference>
<dbReference type="GO" id="GO:0071629">
    <property type="term" value="P:cytoplasm protein quality control by the ubiquitin-proteasome system"/>
    <property type="evidence" value="ECO:0000315"/>
    <property type="project" value="SGD"/>
</dbReference>
<dbReference type="GO" id="GO:0006274">
    <property type="term" value="P:DNA replication termination"/>
    <property type="evidence" value="ECO:0000314"/>
    <property type="project" value="SGD"/>
</dbReference>
<dbReference type="GO" id="GO:0016320">
    <property type="term" value="P:endoplasmic reticulum membrane fusion"/>
    <property type="evidence" value="ECO:0000315"/>
    <property type="project" value="SGD"/>
</dbReference>
<dbReference type="GO" id="GO:0099638">
    <property type="term" value="P:endosome to plasma membrane protein transport"/>
    <property type="evidence" value="ECO:0000315"/>
    <property type="project" value="SGD"/>
</dbReference>
<dbReference type="GO" id="GO:0036503">
    <property type="term" value="P:ERAD pathway"/>
    <property type="evidence" value="ECO:0000314"/>
    <property type="project" value="ComplexPortal"/>
</dbReference>
<dbReference type="GO" id="GO:0016236">
    <property type="term" value="P:macroautophagy"/>
    <property type="evidence" value="ECO:0000315"/>
    <property type="project" value="SGD"/>
</dbReference>
<dbReference type="GO" id="GO:0072671">
    <property type="term" value="P:mitochondria-associated ubiquitin-dependent protein catabolic process"/>
    <property type="evidence" value="ECO:0000315"/>
    <property type="project" value="UniProtKB"/>
</dbReference>
<dbReference type="GO" id="GO:1902979">
    <property type="term" value="P:mitotic DNA replication termination"/>
    <property type="evidence" value="ECO:0000315"/>
    <property type="project" value="SGD"/>
</dbReference>
<dbReference type="GO" id="GO:0051228">
    <property type="term" value="P:mitotic spindle disassembly"/>
    <property type="evidence" value="ECO:0000315"/>
    <property type="project" value="SGD"/>
</dbReference>
<dbReference type="GO" id="GO:0070651">
    <property type="term" value="P:nonfunctional rRNA decay"/>
    <property type="evidence" value="ECO:0000315"/>
    <property type="project" value="SGD"/>
</dbReference>
<dbReference type="GO" id="GO:0071630">
    <property type="term" value="P:nuclear protein quality control by the ubiquitin-proteasome system"/>
    <property type="evidence" value="ECO:0000315"/>
    <property type="project" value="SGD"/>
</dbReference>
<dbReference type="GO" id="GO:0034727">
    <property type="term" value="P:piecemeal microautophagy of the nucleus"/>
    <property type="evidence" value="ECO:0000315"/>
    <property type="project" value="SGD"/>
</dbReference>
<dbReference type="GO" id="GO:0010636">
    <property type="term" value="P:positive regulation of mitochondrial fusion"/>
    <property type="evidence" value="ECO:0000315"/>
    <property type="project" value="SGD"/>
</dbReference>
<dbReference type="GO" id="GO:1900182">
    <property type="term" value="P:positive regulation of protein localization to nucleus"/>
    <property type="evidence" value="ECO:0000315"/>
    <property type="project" value="SGD"/>
</dbReference>
<dbReference type="GO" id="GO:0043161">
    <property type="term" value="P:proteasome-mediated ubiquitin-dependent protein catabolic process"/>
    <property type="evidence" value="ECO:0000315"/>
    <property type="project" value="SGD"/>
</dbReference>
<dbReference type="GO" id="GO:0006515">
    <property type="term" value="P:protein quality control for misfolded or incompletely synthesized proteins"/>
    <property type="evidence" value="ECO:0000303"/>
    <property type="project" value="ComplexPortal"/>
</dbReference>
<dbReference type="GO" id="GO:0043328">
    <property type="term" value="P:protein transport to vacuole involved in ubiquitin-dependent protein catabolic process via the multivesicular body sorting pathway"/>
    <property type="evidence" value="ECO:0000315"/>
    <property type="project" value="SGD"/>
</dbReference>
<dbReference type="GO" id="GO:0032984">
    <property type="term" value="P:protein-containing complex disassembly"/>
    <property type="evidence" value="ECO:0000315"/>
    <property type="project" value="SGD"/>
</dbReference>
<dbReference type="GO" id="GO:0072344">
    <property type="term" value="P:rescue of stalled ribosome"/>
    <property type="evidence" value="ECO:0000303"/>
    <property type="project" value="ComplexPortal"/>
</dbReference>
<dbReference type="GO" id="GO:0030970">
    <property type="term" value="P:retrograde protein transport, ER to cytosol"/>
    <property type="evidence" value="ECO:0000314"/>
    <property type="project" value="SGD"/>
</dbReference>
<dbReference type="GO" id="GO:0034517">
    <property type="term" value="P:ribophagy"/>
    <property type="evidence" value="ECO:0000315"/>
    <property type="project" value="SGD"/>
</dbReference>
<dbReference type="GO" id="GO:1990116">
    <property type="term" value="P:ribosome-associated ubiquitin-dependent protein catabolic process"/>
    <property type="evidence" value="ECO:0000314"/>
    <property type="project" value="UniProt"/>
</dbReference>
<dbReference type="GO" id="GO:1990171">
    <property type="term" value="P:SCF complex disassembly in response to cadmium stress"/>
    <property type="evidence" value="ECO:0000315"/>
    <property type="project" value="SGD"/>
</dbReference>
<dbReference type="GO" id="GO:0031134">
    <property type="term" value="P:sister chromatid biorientation"/>
    <property type="evidence" value="ECO:0000315"/>
    <property type="project" value="SGD"/>
</dbReference>
<dbReference type="GO" id="GO:0120174">
    <property type="term" value="P:stress-induced homeostatically regulated protein degradation pathway"/>
    <property type="evidence" value="ECO:0000315"/>
    <property type="project" value="SGD"/>
</dbReference>
<dbReference type="CDD" id="cd19519">
    <property type="entry name" value="RecA-like_CDC48_r1-like"/>
    <property type="match status" value="1"/>
</dbReference>
<dbReference type="CDD" id="cd19528">
    <property type="entry name" value="RecA-like_CDC48_r2-like"/>
    <property type="match status" value="1"/>
</dbReference>
<dbReference type="FunFam" id="1.10.8.60:FF:000004">
    <property type="entry name" value="Cell division control 48"/>
    <property type="match status" value="1"/>
</dbReference>
<dbReference type="FunFam" id="3.10.330.10:FF:000001">
    <property type="entry name" value="Cell division control 48"/>
    <property type="match status" value="1"/>
</dbReference>
<dbReference type="FunFam" id="2.40.40.20:FF:000003">
    <property type="entry name" value="Transitional endoplasmic reticulum ATPase"/>
    <property type="match status" value="1"/>
</dbReference>
<dbReference type="FunFam" id="3.40.50.300:FF:000012">
    <property type="entry name" value="Transitional endoplasmic reticulum ATPase"/>
    <property type="match status" value="1"/>
</dbReference>
<dbReference type="FunFam" id="3.40.50.300:FF:000048">
    <property type="entry name" value="Transitional endoplasmic reticulum ATPase"/>
    <property type="match status" value="1"/>
</dbReference>
<dbReference type="Gene3D" id="1.10.8.60">
    <property type="match status" value="1"/>
</dbReference>
<dbReference type="Gene3D" id="2.40.40.20">
    <property type="match status" value="1"/>
</dbReference>
<dbReference type="Gene3D" id="3.10.330.10">
    <property type="match status" value="1"/>
</dbReference>
<dbReference type="Gene3D" id="6.10.20.150">
    <property type="match status" value="1"/>
</dbReference>
<dbReference type="Gene3D" id="3.40.50.300">
    <property type="entry name" value="P-loop containing nucleotide triphosphate hydrolases"/>
    <property type="match status" value="2"/>
</dbReference>
<dbReference type="InterPro" id="IPR003593">
    <property type="entry name" value="AAA+_ATPase"/>
</dbReference>
<dbReference type="InterPro" id="IPR005938">
    <property type="entry name" value="AAA_ATPase_CDC48"/>
</dbReference>
<dbReference type="InterPro" id="IPR050168">
    <property type="entry name" value="AAA_ATPase_domain"/>
</dbReference>
<dbReference type="InterPro" id="IPR041569">
    <property type="entry name" value="AAA_lid_3"/>
</dbReference>
<dbReference type="InterPro" id="IPR009010">
    <property type="entry name" value="Asp_de-COase-like_dom_sf"/>
</dbReference>
<dbReference type="InterPro" id="IPR003959">
    <property type="entry name" value="ATPase_AAA_core"/>
</dbReference>
<dbReference type="InterPro" id="IPR003960">
    <property type="entry name" value="ATPase_AAA_CS"/>
</dbReference>
<dbReference type="InterPro" id="IPR004201">
    <property type="entry name" value="Cdc48_dom2"/>
</dbReference>
<dbReference type="InterPro" id="IPR029067">
    <property type="entry name" value="CDC48_domain_2-like_sf"/>
</dbReference>
<dbReference type="InterPro" id="IPR003338">
    <property type="entry name" value="CDC4_N-term_subdom"/>
</dbReference>
<dbReference type="InterPro" id="IPR027417">
    <property type="entry name" value="P-loop_NTPase"/>
</dbReference>
<dbReference type="NCBIfam" id="TIGR01243">
    <property type="entry name" value="CDC48"/>
    <property type="match status" value="1"/>
</dbReference>
<dbReference type="PANTHER" id="PTHR23077">
    <property type="entry name" value="AAA-FAMILY ATPASE"/>
    <property type="match status" value="1"/>
</dbReference>
<dbReference type="PANTHER" id="PTHR23077:SF171">
    <property type="entry name" value="NUCLEAR VALOSIN-CONTAINING PROTEIN-LIKE"/>
    <property type="match status" value="1"/>
</dbReference>
<dbReference type="Pfam" id="PF00004">
    <property type="entry name" value="AAA"/>
    <property type="match status" value="2"/>
</dbReference>
<dbReference type="Pfam" id="PF17862">
    <property type="entry name" value="AAA_lid_3"/>
    <property type="match status" value="2"/>
</dbReference>
<dbReference type="Pfam" id="PF02933">
    <property type="entry name" value="CDC48_2"/>
    <property type="match status" value="1"/>
</dbReference>
<dbReference type="Pfam" id="PF02359">
    <property type="entry name" value="CDC48_N"/>
    <property type="match status" value="1"/>
</dbReference>
<dbReference type="SMART" id="SM00382">
    <property type="entry name" value="AAA"/>
    <property type="match status" value="2"/>
</dbReference>
<dbReference type="SMART" id="SM01072">
    <property type="entry name" value="CDC48_2"/>
    <property type="match status" value="1"/>
</dbReference>
<dbReference type="SMART" id="SM01073">
    <property type="entry name" value="CDC48_N"/>
    <property type="match status" value="1"/>
</dbReference>
<dbReference type="SUPFAM" id="SSF50692">
    <property type="entry name" value="ADC-like"/>
    <property type="match status" value="1"/>
</dbReference>
<dbReference type="SUPFAM" id="SSF54585">
    <property type="entry name" value="Cdc48 domain 2-like"/>
    <property type="match status" value="1"/>
</dbReference>
<dbReference type="SUPFAM" id="SSF52540">
    <property type="entry name" value="P-loop containing nucleoside triphosphate hydrolases"/>
    <property type="match status" value="2"/>
</dbReference>
<dbReference type="PROSITE" id="PS00674">
    <property type="entry name" value="AAA"/>
    <property type="match status" value="2"/>
</dbReference>
<protein>
    <recommendedName>
        <fullName evidence="32">Cell division control protein 48</fullName>
        <ecNumber evidence="21">3.6.4.6</ecNumber>
    </recommendedName>
    <alternativeName>
        <fullName evidence="30">Cell division cycle protein 48</fullName>
    </alternativeName>
    <alternativeName>
        <fullName evidence="31">Transitional endoplasmic reticulum ATPase homolog</fullName>
    </alternativeName>
</protein>
<feature type="chain" id="PRO_0000084587" description="Cell division control protein 48">
    <location>
        <begin position="1"/>
        <end position="835"/>
    </location>
</feature>
<feature type="region of interest" description="Disordered" evidence="4">
    <location>
        <begin position="1"/>
        <end position="21"/>
    </location>
</feature>
<feature type="region of interest" description="Disordered" evidence="4">
    <location>
        <begin position="720"/>
        <end position="746"/>
    </location>
</feature>
<feature type="region of interest" description="Disordered" evidence="4">
    <location>
        <begin position="792"/>
        <end position="835"/>
    </location>
</feature>
<feature type="compositionally biased region" description="Basic and acidic residues" evidence="4">
    <location>
        <begin position="720"/>
        <end position="729"/>
    </location>
</feature>
<feature type="compositionally biased region" description="Low complexity" evidence="4">
    <location>
        <begin position="802"/>
        <end position="826"/>
    </location>
</feature>
<feature type="binding site" evidence="2">
    <location>
        <begin position="257"/>
        <end position="263"/>
    </location>
    <ligand>
        <name>ATP</name>
        <dbReference type="ChEBI" id="CHEBI:30616"/>
        <label>1</label>
    </ligand>
</feature>
<feature type="binding site" evidence="2">
    <location>
        <position position="358"/>
    </location>
    <ligand>
        <name>ATP</name>
        <dbReference type="ChEBI" id="CHEBI:30616"/>
        <label>1</label>
    </ligand>
</feature>
<feature type="binding site" evidence="2">
    <location>
        <position position="394"/>
    </location>
    <ligand>
        <name>ATP</name>
        <dbReference type="ChEBI" id="CHEBI:30616"/>
        <label>1</label>
    </ligand>
</feature>
<feature type="binding site" evidence="3">
    <location>
        <begin position="531"/>
        <end position="536"/>
    </location>
    <ligand>
        <name>ATP</name>
        <dbReference type="ChEBI" id="CHEBI:30616"/>
        <label>2</label>
    </ligand>
</feature>
<feature type="modified residue" description="Phosphoserine" evidence="41">
    <location>
        <position position="472"/>
    </location>
</feature>
<feature type="modified residue" description="Phosphoserine" evidence="40 42">
    <location>
        <position position="519"/>
    </location>
</feature>
<feature type="modified residue" description="Phosphothreonine" evidence="41 42">
    <location>
        <position position="735"/>
    </location>
</feature>
<feature type="modified residue" description="Phosphoserine" evidence="39 40">
    <location>
        <position position="770"/>
    </location>
</feature>
<feature type="cross-link" description="Glycyl lysine isopeptide (Lys-Gly) (interchain with G-Cter in ubiquitin)" evidence="43">
    <location>
        <position position="305"/>
    </location>
</feature>
<feature type="cross-link" description="Glycyl lysine isopeptide (Lys-Gly) (interchain with G-Cter in ubiquitin)" evidence="43">
    <location>
        <position position="322"/>
    </location>
</feature>
<feature type="cross-link" description="Glycyl lysine isopeptide (Lys-Gly) (interchain with G-Cter in ubiquitin)" evidence="43">
    <location>
        <position position="346"/>
    </location>
</feature>
<feature type="cross-link" description="Glycyl lysine isopeptide (Lys-Gly) (interchain with G-Cter in ubiquitin)" evidence="43">
    <location>
        <position position="522"/>
    </location>
</feature>
<feature type="cross-link" description="Glycyl lysine isopeptide (Lys-Gly) (interchain with G-Cter in ubiquitin)" evidence="43">
    <location>
        <position position="539"/>
    </location>
</feature>
<feature type="cross-link" description="Glycyl lysine isopeptide (Lys-Gly) (interchain with G-Cter in ubiquitin)" evidence="10">
    <location>
        <position position="594"/>
    </location>
</feature>
<feature type="cross-link" description="Glycyl lysine isopeptide (Lys-Gly) (interchain with G-Cter in ubiquitin)" evidence="10">
    <location>
        <position position="673"/>
    </location>
</feature>
<feature type="mutagenesis site" description="Moderate reduction in growth rate." evidence="21">
    <original>K</original>
    <variation>A</variation>
    <location>
        <position position="261"/>
    </location>
</feature>
<feature type="mutagenesis site" description="Probable loss of ATP binding. Complete loss of catalytic activity." evidence="21">
    <original>K</original>
    <variation>T</variation>
    <location>
        <position position="261"/>
    </location>
</feature>
<feature type="mutagenesis site" description="Moderate reduction in growth rate." evidence="21">
    <original>E</original>
    <variation>A</variation>
    <location>
        <position position="315"/>
    </location>
</feature>
<feature type="mutagenesis site" description="Severe loss of catalytic activity without affecting cooperativity between the 2 ATP-binding regions. Slight reduction in growth rate." evidence="21">
    <original>E</original>
    <variation>D</variation>
    <location>
        <position position="315"/>
    </location>
</feature>
<feature type="mutagenesis site" description="Severe reduction in growth rate." evidence="21">
    <original>E</original>
    <variation>N</variation>
    <location>
        <position position="315"/>
    </location>
</feature>
<feature type="mutagenesis site" description="Severe loss of catalytic activity and cooperativity between the 2 ATP-binding regions. Lethal. Restores cell growth; when associated with A-358; A-369; S-471; A-471 or H-475." evidence="21">
    <original>E</original>
    <variation>Q</variation>
    <location>
        <position position="315"/>
    </location>
</feature>
<feature type="mutagenesis site" description="Slight reduction in growth rate. Restores cell growth; when associated with Q-315." evidence="21">
    <original>N</original>
    <variation>A</variation>
    <location>
        <position position="358"/>
    </location>
</feature>
<feature type="mutagenesis site" description="No effect on growth rate. Restores cell growth; when associated with Q-315." evidence="21">
    <original>R</original>
    <variation>A</variation>
    <location>
        <position position="369"/>
    </location>
</feature>
<feature type="mutagenesis site" description="Restores cell growth; when associated with Q-315." evidence="21">
    <original>P</original>
    <variation>A</variation>
    <variation>S</variation>
    <location>
        <position position="471"/>
    </location>
</feature>
<feature type="mutagenesis site" description="Restores cell growth; when associated with Q-315." evidence="21">
    <original>R</original>
    <variation>H</variation>
    <location>
        <position position="475"/>
    </location>
</feature>
<feature type="mutagenesis site" description="Severe loss of catalytic activity. Lethal." evidence="21">
    <original>K</original>
    <variation>A</variation>
    <variation>T</variation>
    <location>
        <position position="534"/>
    </location>
</feature>
<feature type="mutagenesis site" description="Moderate reduction in growth rate." evidence="21">
    <original>E</original>
    <variation>D</variation>
    <location>
        <position position="588"/>
    </location>
</feature>
<feature type="mutagenesis site" description="Lethal." evidence="21">
    <original>E</original>
    <variation>Q</variation>
    <location>
        <position position="588"/>
    </location>
</feature>
<feature type="mutagenesis site" description="Lethal." evidence="21">
    <original>R</original>
    <variation>A</variation>
    <location>
        <position position="645"/>
    </location>
</feature>
<feature type="turn" evidence="44">
    <location>
        <begin position="23"/>
        <end position="27"/>
    </location>
</feature>
<feature type="strand" evidence="45">
    <location>
        <begin position="35"/>
        <end position="39"/>
    </location>
</feature>
<feature type="strand" evidence="45">
    <location>
        <begin position="48"/>
        <end position="51"/>
    </location>
</feature>
<feature type="helix" evidence="45">
    <location>
        <begin position="53"/>
        <end position="59"/>
    </location>
</feature>
<feature type="strand" evidence="45">
    <location>
        <begin position="66"/>
        <end position="70"/>
    </location>
</feature>
<feature type="strand" evidence="46">
    <location>
        <begin position="72"/>
        <end position="74"/>
    </location>
</feature>
<feature type="strand" evidence="45">
    <location>
        <begin position="76"/>
        <end position="83"/>
    </location>
</feature>
<feature type="strand" evidence="45">
    <location>
        <begin position="91"/>
        <end position="93"/>
    </location>
</feature>
<feature type="helix" evidence="44">
    <location>
        <begin position="97"/>
        <end position="102"/>
    </location>
</feature>
<feature type="strand" evidence="45">
    <location>
        <begin position="109"/>
        <end position="114"/>
    </location>
</feature>
<feature type="strand" evidence="45">
    <location>
        <begin position="119"/>
        <end position="129"/>
    </location>
</feature>
<feature type="helix" evidence="45">
    <location>
        <begin position="130"/>
        <end position="133"/>
    </location>
</feature>
<feature type="helix" evidence="45">
    <location>
        <begin position="140"/>
        <end position="148"/>
    </location>
</feature>
<feature type="strand" evidence="45">
    <location>
        <begin position="161"/>
        <end position="166"/>
    </location>
</feature>
<feature type="strand" evidence="45">
    <location>
        <begin position="169"/>
        <end position="180"/>
    </location>
</feature>
<feature type="strand" evidence="45">
    <location>
        <begin position="182"/>
        <end position="193"/>
    </location>
</feature>
<feature type="helix" evidence="45">
    <location>
        <begin position="202"/>
        <end position="204"/>
    </location>
</feature>
<feature type="strand" evidence="45">
    <location>
        <begin position="206"/>
        <end position="208"/>
    </location>
</feature>
<feature type="helix" evidence="44">
    <location>
        <begin position="213"/>
        <end position="215"/>
    </location>
</feature>
<feature type="helix" evidence="44">
    <location>
        <begin position="221"/>
        <end position="235"/>
    </location>
</feature>
<feature type="helix" evidence="44">
    <location>
        <begin position="239"/>
        <end position="243"/>
    </location>
</feature>
<feature type="strand" evidence="44">
    <location>
        <begin position="251"/>
        <end position="254"/>
    </location>
</feature>
<feature type="helix" evidence="44">
    <location>
        <begin position="261"/>
        <end position="272"/>
    </location>
</feature>
<feature type="strand" evidence="44">
    <location>
        <begin position="275"/>
        <end position="278"/>
    </location>
</feature>
<feature type="helix" evidence="44">
    <location>
        <begin position="281"/>
        <end position="284"/>
    </location>
</feature>
<feature type="strand" evidence="44">
    <location>
        <begin position="285"/>
        <end position="287"/>
    </location>
</feature>
<feature type="turn" evidence="44">
    <location>
        <begin position="289"/>
        <end position="291"/>
    </location>
</feature>
<feature type="helix" evidence="44">
    <location>
        <begin position="292"/>
        <end position="304"/>
    </location>
</feature>
<feature type="strand" evidence="44">
    <location>
        <begin position="308"/>
        <end position="314"/>
    </location>
</feature>
<feature type="helix" evidence="44">
    <location>
        <begin position="316"/>
        <end position="319"/>
    </location>
</feature>
<feature type="helix" evidence="44">
    <location>
        <begin position="323"/>
        <end position="325"/>
    </location>
</feature>
<feature type="helix" evidence="44">
    <location>
        <begin position="330"/>
        <end position="343"/>
    </location>
</feature>
<feature type="strand" evidence="44">
    <location>
        <begin position="346"/>
        <end position="358"/>
    </location>
</feature>
<feature type="helix" evidence="44">
    <location>
        <begin position="360"/>
        <end position="362"/>
    </location>
</feature>
<feature type="helix" evidence="44">
    <location>
        <begin position="365"/>
        <end position="367"/>
    </location>
</feature>
<feature type="strand" evidence="44">
    <location>
        <begin position="375"/>
        <end position="378"/>
    </location>
</feature>
<feature type="helix" evidence="44">
    <location>
        <begin position="384"/>
        <end position="394"/>
    </location>
</feature>
<feature type="helix" evidence="44">
    <location>
        <begin position="406"/>
        <end position="412"/>
    </location>
</feature>
<feature type="helix" evidence="44">
    <location>
        <begin position="418"/>
        <end position="436"/>
    </location>
</feature>
<feature type="helix" evidence="44">
    <location>
        <begin position="437"/>
        <end position="439"/>
    </location>
</feature>
<feature type="strand" evidence="44">
    <location>
        <begin position="442"/>
        <end position="445"/>
    </location>
</feature>
<feature type="helix" evidence="44">
    <location>
        <begin position="449"/>
        <end position="452"/>
    </location>
</feature>
<feature type="helix" evidence="44">
    <location>
        <begin position="459"/>
        <end position="467"/>
    </location>
</feature>
<feature type="helix" evidence="44">
    <location>
        <begin position="473"/>
        <end position="475"/>
    </location>
</feature>
<feature type="helix" evidence="46">
    <location>
        <begin position="486"/>
        <end position="488"/>
    </location>
</feature>
<feature type="helix" evidence="44">
    <location>
        <begin position="493"/>
        <end position="508"/>
    </location>
</feature>
<feature type="helix" evidence="44">
    <location>
        <begin position="510"/>
        <end position="515"/>
    </location>
</feature>
<feature type="strand" evidence="44">
    <location>
        <begin position="523"/>
        <end position="529"/>
    </location>
</feature>
<feature type="helix" evidence="44">
    <location>
        <begin position="535"/>
        <end position="544"/>
    </location>
</feature>
<feature type="strand" evidence="44">
    <location>
        <begin position="549"/>
        <end position="552"/>
    </location>
</feature>
<feature type="helix" evidence="44">
    <location>
        <begin position="554"/>
        <end position="562"/>
    </location>
</feature>
<feature type="strand" evidence="46">
    <location>
        <begin position="565"/>
        <end position="567"/>
    </location>
</feature>
<feature type="helix" evidence="44">
    <location>
        <begin position="569"/>
        <end position="578"/>
    </location>
</feature>
<feature type="strand" evidence="44">
    <location>
        <begin position="581"/>
        <end position="586"/>
    </location>
</feature>
<feature type="helix" evidence="44">
    <location>
        <begin position="589"/>
        <end position="591"/>
    </location>
</feature>
<feature type="helix" evidence="44">
    <location>
        <begin position="609"/>
        <end position="619"/>
    </location>
</feature>
<feature type="strand" evidence="44">
    <location>
        <begin position="623"/>
        <end position="625"/>
    </location>
</feature>
<feature type="strand" evidence="44">
    <location>
        <begin position="627"/>
        <end position="634"/>
    </location>
</feature>
<feature type="helix" evidence="44">
    <location>
        <begin position="636"/>
        <end position="638"/>
    </location>
</feature>
<feature type="helix" evidence="44">
    <location>
        <begin position="641"/>
        <end position="644"/>
    </location>
</feature>
<feature type="strand" evidence="44">
    <location>
        <begin position="651"/>
        <end position="654"/>
    </location>
</feature>
<feature type="helix" evidence="44">
    <location>
        <begin position="660"/>
        <end position="670"/>
    </location>
</feature>
<feature type="turn" evidence="44">
    <location>
        <begin position="671"/>
        <end position="673"/>
    </location>
</feature>
<feature type="helix" evidence="44">
    <location>
        <begin position="683"/>
        <end position="688"/>
    </location>
</feature>
<feature type="turn" evidence="44">
    <location>
        <begin position="689"/>
        <end position="691"/>
    </location>
</feature>
<feature type="helix" evidence="44">
    <location>
        <begin position="694"/>
        <end position="718"/>
    </location>
</feature>
<feature type="helix" evidence="44">
    <location>
        <begin position="755"/>
        <end position="763"/>
    </location>
</feature>
<feature type="helix" evidence="44">
    <location>
        <begin position="771"/>
        <end position="788"/>
    </location>
</feature>